<feature type="chain" id="PRO_0000198511" description="Ribonuclease P protein component">
    <location>
        <begin position="1"/>
        <end position="133"/>
    </location>
</feature>
<name>RNPA_PSEPK</name>
<comment type="function">
    <text evidence="1">RNaseP catalyzes the removal of the 5'-leader sequence from pre-tRNA to produce the mature 5'-terminus. It can also cleave other RNA substrates such as 4.5S RNA. The protein component plays an auxiliary but essential role in vivo by binding to the 5'-leader sequence and broadening the substrate specificity of the ribozyme.</text>
</comment>
<comment type="catalytic activity">
    <reaction evidence="1">
        <text>Endonucleolytic cleavage of RNA, removing 5'-extranucleotides from tRNA precursor.</text>
        <dbReference type="EC" id="3.1.26.5"/>
    </reaction>
</comment>
<comment type="subunit">
    <text evidence="1">Consists of a catalytic RNA component (M1 or rnpB) and a protein subunit.</text>
</comment>
<comment type="similarity">
    <text evidence="1">Belongs to the RnpA family.</text>
</comment>
<comment type="sequence caution" evidence="2">
    <conflict type="erroneous initiation">
        <sequence resource="EMBL-CDS" id="AAN65642"/>
    </conflict>
</comment>
<keyword id="KW-0255">Endonuclease</keyword>
<keyword id="KW-0378">Hydrolase</keyword>
<keyword id="KW-0540">Nuclease</keyword>
<keyword id="KW-1185">Reference proteome</keyword>
<keyword id="KW-0694">RNA-binding</keyword>
<keyword id="KW-0819">tRNA processing</keyword>
<proteinExistence type="inferred from homology"/>
<evidence type="ECO:0000255" key="1">
    <source>
        <dbReference type="HAMAP-Rule" id="MF_00227"/>
    </source>
</evidence>
<evidence type="ECO:0000305" key="2"/>
<reference key="1">
    <citation type="journal article" date="2002" name="Environ. Microbiol.">
        <title>Complete genome sequence and comparative analysis of the metabolically versatile Pseudomonas putida KT2440.</title>
        <authorList>
            <person name="Nelson K.E."/>
            <person name="Weinel C."/>
            <person name="Paulsen I.T."/>
            <person name="Dodson R.J."/>
            <person name="Hilbert H."/>
            <person name="Martins dos Santos V.A.P."/>
            <person name="Fouts D.E."/>
            <person name="Gill S.R."/>
            <person name="Pop M."/>
            <person name="Holmes M."/>
            <person name="Brinkac L.M."/>
            <person name="Beanan M.J."/>
            <person name="DeBoy R.T."/>
            <person name="Daugherty S.C."/>
            <person name="Kolonay J.F."/>
            <person name="Madupu R."/>
            <person name="Nelson W.C."/>
            <person name="White O."/>
            <person name="Peterson J.D."/>
            <person name="Khouri H.M."/>
            <person name="Hance I."/>
            <person name="Chris Lee P."/>
            <person name="Holtzapple E.K."/>
            <person name="Scanlan D."/>
            <person name="Tran K."/>
            <person name="Moazzez A."/>
            <person name="Utterback T.R."/>
            <person name="Rizzo M."/>
            <person name="Lee K."/>
            <person name="Kosack D."/>
            <person name="Moestl D."/>
            <person name="Wedler H."/>
            <person name="Lauber J."/>
            <person name="Stjepandic D."/>
            <person name="Hoheisel J."/>
            <person name="Straetz M."/>
            <person name="Heim S."/>
            <person name="Kiewitz C."/>
            <person name="Eisen J.A."/>
            <person name="Timmis K.N."/>
            <person name="Duesterhoeft A."/>
            <person name="Tuemmler B."/>
            <person name="Fraser C.M."/>
        </authorList>
    </citation>
    <scope>NUCLEOTIDE SEQUENCE [LARGE SCALE GENOMIC DNA]</scope>
    <source>
        <strain>ATCC 47054 / DSM 6125 / CFBP 8728 / NCIMB 11950 / KT2440</strain>
    </source>
</reference>
<accession>P0A167</accession>
<accession>P25752</accession>
<gene>
    <name evidence="1" type="primary">rnpA</name>
    <name type="ordered locus">PP_0008</name>
</gene>
<sequence>MSQDFSREKRLLTPRHFKAVFDSPTGKVPGKNLLILARENGLDHPRLGLVIGKKSVKLAVQRNRLKRLMRDSFRLNQQLLAGLDIVIVARKGLGEIENPELHQHFGKLWKRLARSRPTPAVTANSAGVDSQDA</sequence>
<protein>
    <recommendedName>
        <fullName evidence="1">Ribonuclease P protein component</fullName>
        <shortName evidence="1">RNase P protein</shortName>
        <shortName evidence="1">RNaseP protein</shortName>
        <ecNumber evidence="1">3.1.26.5</ecNumber>
    </recommendedName>
    <alternativeName>
        <fullName evidence="1">Protein C5</fullName>
    </alternativeName>
</protein>
<organism>
    <name type="scientific">Pseudomonas putida (strain ATCC 47054 / DSM 6125 / CFBP 8728 / NCIMB 11950 / KT2440)</name>
    <dbReference type="NCBI Taxonomy" id="160488"/>
    <lineage>
        <taxon>Bacteria</taxon>
        <taxon>Pseudomonadati</taxon>
        <taxon>Pseudomonadota</taxon>
        <taxon>Gammaproteobacteria</taxon>
        <taxon>Pseudomonadales</taxon>
        <taxon>Pseudomonadaceae</taxon>
        <taxon>Pseudomonas</taxon>
    </lineage>
</organism>
<dbReference type="EC" id="3.1.26.5" evidence="1"/>
<dbReference type="EMBL" id="AE015451">
    <property type="protein sequence ID" value="AAN65642.1"/>
    <property type="status" value="ALT_INIT"/>
    <property type="molecule type" value="Genomic_DNA"/>
</dbReference>
<dbReference type="RefSeq" id="NP_742178.1">
    <property type="nucleotide sequence ID" value="NC_002947.4"/>
</dbReference>
<dbReference type="SMR" id="P0A167"/>
<dbReference type="STRING" id="160488.PP_0008"/>
<dbReference type="PaxDb" id="160488-PP_0008"/>
<dbReference type="KEGG" id="ppu:PP_0008"/>
<dbReference type="PATRIC" id="fig|160488.4.peg.8"/>
<dbReference type="eggNOG" id="COG0594">
    <property type="taxonomic scope" value="Bacteria"/>
</dbReference>
<dbReference type="HOGENOM" id="CLU_117179_11_0_6"/>
<dbReference type="OrthoDB" id="9796422at2"/>
<dbReference type="PhylomeDB" id="P0A167"/>
<dbReference type="Proteomes" id="UP000000556">
    <property type="component" value="Chromosome"/>
</dbReference>
<dbReference type="GO" id="GO:0030677">
    <property type="term" value="C:ribonuclease P complex"/>
    <property type="evidence" value="ECO:0007669"/>
    <property type="project" value="TreeGrafter"/>
</dbReference>
<dbReference type="GO" id="GO:0042781">
    <property type="term" value="F:3'-tRNA processing endoribonuclease activity"/>
    <property type="evidence" value="ECO:0007669"/>
    <property type="project" value="TreeGrafter"/>
</dbReference>
<dbReference type="GO" id="GO:0004526">
    <property type="term" value="F:ribonuclease P activity"/>
    <property type="evidence" value="ECO:0007669"/>
    <property type="project" value="UniProtKB-UniRule"/>
</dbReference>
<dbReference type="GO" id="GO:0000049">
    <property type="term" value="F:tRNA binding"/>
    <property type="evidence" value="ECO:0007669"/>
    <property type="project" value="UniProtKB-UniRule"/>
</dbReference>
<dbReference type="GO" id="GO:0001682">
    <property type="term" value="P:tRNA 5'-leader removal"/>
    <property type="evidence" value="ECO:0007669"/>
    <property type="project" value="UniProtKB-UniRule"/>
</dbReference>
<dbReference type="Gene3D" id="3.30.230.10">
    <property type="match status" value="1"/>
</dbReference>
<dbReference type="HAMAP" id="MF_00227">
    <property type="entry name" value="RNase_P"/>
    <property type="match status" value="1"/>
</dbReference>
<dbReference type="InterPro" id="IPR020568">
    <property type="entry name" value="Ribosomal_Su5_D2-typ_SF"/>
</dbReference>
<dbReference type="InterPro" id="IPR014721">
    <property type="entry name" value="Ribsml_uS5_D2-typ_fold_subgr"/>
</dbReference>
<dbReference type="InterPro" id="IPR000100">
    <property type="entry name" value="RNase_P"/>
</dbReference>
<dbReference type="InterPro" id="IPR020539">
    <property type="entry name" value="RNase_P_CS"/>
</dbReference>
<dbReference type="NCBIfam" id="TIGR00188">
    <property type="entry name" value="rnpA"/>
    <property type="match status" value="1"/>
</dbReference>
<dbReference type="PANTHER" id="PTHR33992">
    <property type="entry name" value="RIBONUCLEASE P PROTEIN COMPONENT"/>
    <property type="match status" value="1"/>
</dbReference>
<dbReference type="PANTHER" id="PTHR33992:SF1">
    <property type="entry name" value="RIBONUCLEASE P PROTEIN COMPONENT"/>
    <property type="match status" value="1"/>
</dbReference>
<dbReference type="Pfam" id="PF00825">
    <property type="entry name" value="Ribonuclease_P"/>
    <property type="match status" value="1"/>
</dbReference>
<dbReference type="SUPFAM" id="SSF54211">
    <property type="entry name" value="Ribosomal protein S5 domain 2-like"/>
    <property type="match status" value="1"/>
</dbReference>
<dbReference type="PROSITE" id="PS00648">
    <property type="entry name" value="RIBONUCLEASE_P"/>
    <property type="match status" value="1"/>
</dbReference>